<protein>
    <recommendedName>
        <fullName evidence="1">Error-prone DNA polymerase</fullName>
        <ecNumber evidence="1">2.7.7.7</ecNumber>
    </recommendedName>
</protein>
<reference key="1">
    <citation type="journal article" date="2005" name="J. Bacteriol.">
        <title>Complete genome sequence and analysis of the multiresistant nosocomial pathogen Corynebacterium jeikeium K411, a lipid-requiring bacterium of the human skin flora.</title>
        <authorList>
            <person name="Tauch A."/>
            <person name="Kaiser O."/>
            <person name="Hain T."/>
            <person name="Goesmann A."/>
            <person name="Weisshaar B."/>
            <person name="Albersmeier A."/>
            <person name="Bekel T."/>
            <person name="Bischoff N."/>
            <person name="Brune I."/>
            <person name="Chakraborty T."/>
            <person name="Kalinowski J."/>
            <person name="Meyer F."/>
            <person name="Rupp O."/>
            <person name="Schneiker S."/>
            <person name="Viehoever P."/>
            <person name="Puehler A."/>
        </authorList>
    </citation>
    <scope>NUCLEOTIDE SEQUENCE [LARGE SCALE GENOMIC DNA]</scope>
    <source>
        <strain>K411</strain>
    </source>
</reference>
<organism>
    <name type="scientific">Corynebacterium jeikeium (strain K411)</name>
    <dbReference type="NCBI Taxonomy" id="306537"/>
    <lineage>
        <taxon>Bacteria</taxon>
        <taxon>Bacillati</taxon>
        <taxon>Actinomycetota</taxon>
        <taxon>Actinomycetes</taxon>
        <taxon>Mycobacteriales</taxon>
        <taxon>Corynebacteriaceae</taxon>
        <taxon>Corynebacterium</taxon>
    </lineage>
</organism>
<name>DNAE2_CORJK</name>
<feature type="chain" id="PRO_0000103379" description="Error-prone DNA polymerase">
    <location>
        <begin position="1"/>
        <end position="1153"/>
    </location>
</feature>
<feature type="region of interest" description="Disordered" evidence="2">
    <location>
        <begin position="1"/>
        <end position="39"/>
    </location>
</feature>
<feature type="region of interest" description="Disordered" evidence="2">
    <location>
        <begin position="64"/>
        <end position="89"/>
    </location>
</feature>
<comment type="function">
    <text evidence="1">DNA polymerase involved in damage-induced mutagenesis and translesion synthesis (TLS). It is not the major replicative DNA polymerase.</text>
</comment>
<comment type="catalytic activity">
    <reaction evidence="1">
        <text>DNA(n) + a 2'-deoxyribonucleoside 5'-triphosphate = DNA(n+1) + diphosphate</text>
        <dbReference type="Rhea" id="RHEA:22508"/>
        <dbReference type="Rhea" id="RHEA-COMP:17339"/>
        <dbReference type="Rhea" id="RHEA-COMP:17340"/>
        <dbReference type="ChEBI" id="CHEBI:33019"/>
        <dbReference type="ChEBI" id="CHEBI:61560"/>
        <dbReference type="ChEBI" id="CHEBI:173112"/>
        <dbReference type="EC" id="2.7.7.7"/>
    </reaction>
</comment>
<comment type="subcellular location">
    <subcellularLocation>
        <location evidence="1">Cytoplasm</location>
    </subcellularLocation>
</comment>
<comment type="similarity">
    <text evidence="1">Belongs to the DNA polymerase type-C family. DnaE2 subfamily.</text>
</comment>
<proteinExistence type="inferred from homology"/>
<dbReference type="EC" id="2.7.7.7" evidence="1"/>
<dbReference type="EMBL" id="CR931997">
    <property type="protein sequence ID" value="CAI37886.1"/>
    <property type="molecule type" value="Genomic_DNA"/>
</dbReference>
<dbReference type="RefSeq" id="WP_011274077.1">
    <property type="nucleotide sequence ID" value="NC_007164.1"/>
</dbReference>
<dbReference type="SMR" id="Q4JTH1"/>
<dbReference type="STRING" id="306537.jk1709"/>
<dbReference type="KEGG" id="cjk:jk1709"/>
<dbReference type="PATRIC" id="fig|306537.10.peg.1730"/>
<dbReference type="eggNOG" id="COG0587">
    <property type="taxonomic scope" value="Bacteria"/>
</dbReference>
<dbReference type="HOGENOM" id="CLU_001600_4_0_11"/>
<dbReference type="OrthoDB" id="9803237at2"/>
<dbReference type="Proteomes" id="UP000000545">
    <property type="component" value="Chromosome"/>
</dbReference>
<dbReference type="GO" id="GO:0005737">
    <property type="term" value="C:cytoplasm"/>
    <property type="evidence" value="ECO:0007669"/>
    <property type="project" value="UniProtKB-SubCell"/>
</dbReference>
<dbReference type="GO" id="GO:0008408">
    <property type="term" value="F:3'-5' exonuclease activity"/>
    <property type="evidence" value="ECO:0007669"/>
    <property type="project" value="InterPro"/>
</dbReference>
<dbReference type="GO" id="GO:0003887">
    <property type="term" value="F:DNA-directed DNA polymerase activity"/>
    <property type="evidence" value="ECO:0007669"/>
    <property type="project" value="UniProtKB-UniRule"/>
</dbReference>
<dbReference type="GO" id="GO:0006281">
    <property type="term" value="P:DNA repair"/>
    <property type="evidence" value="ECO:0007669"/>
    <property type="project" value="UniProtKB-UniRule"/>
</dbReference>
<dbReference type="GO" id="GO:0006260">
    <property type="term" value="P:DNA replication"/>
    <property type="evidence" value="ECO:0007669"/>
    <property type="project" value="UniProtKB-KW"/>
</dbReference>
<dbReference type="CDD" id="cd04485">
    <property type="entry name" value="DnaE_OBF"/>
    <property type="match status" value="1"/>
</dbReference>
<dbReference type="CDD" id="cd07431">
    <property type="entry name" value="PHP_PolIIIA"/>
    <property type="match status" value="1"/>
</dbReference>
<dbReference type="Gene3D" id="1.10.150.870">
    <property type="match status" value="1"/>
</dbReference>
<dbReference type="Gene3D" id="3.20.20.140">
    <property type="entry name" value="Metal-dependent hydrolases"/>
    <property type="match status" value="1"/>
</dbReference>
<dbReference type="HAMAP" id="MF_01902">
    <property type="entry name" value="DNApol_error_prone"/>
    <property type="match status" value="1"/>
</dbReference>
<dbReference type="InterPro" id="IPR011708">
    <property type="entry name" value="DNA_pol3_alpha_NTPase_dom"/>
</dbReference>
<dbReference type="InterPro" id="IPR040982">
    <property type="entry name" value="DNA_pol3_finger"/>
</dbReference>
<dbReference type="InterPro" id="IPR023073">
    <property type="entry name" value="DnaE2"/>
</dbReference>
<dbReference type="InterPro" id="IPR004805">
    <property type="entry name" value="DnaE2/DnaE/PolC"/>
</dbReference>
<dbReference type="InterPro" id="IPR029460">
    <property type="entry name" value="DNAPol_HHH"/>
</dbReference>
<dbReference type="InterPro" id="IPR004013">
    <property type="entry name" value="PHP_dom"/>
</dbReference>
<dbReference type="InterPro" id="IPR003141">
    <property type="entry name" value="Pol/His_phosphatase_N"/>
</dbReference>
<dbReference type="InterPro" id="IPR010994">
    <property type="entry name" value="RuvA_2-like"/>
</dbReference>
<dbReference type="NCBIfam" id="NF004225">
    <property type="entry name" value="PRK05672.1"/>
    <property type="match status" value="1"/>
</dbReference>
<dbReference type="PANTHER" id="PTHR32294">
    <property type="entry name" value="DNA POLYMERASE III SUBUNIT ALPHA"/>
    <property type="match status" value="1"/>
</dbReference>
<dbReference type="PANTHER" id="PTHR32294:SF4">
    <property type="entry name" value="ERROR-PRONE DNA POLYMERASE"/>
    <property type="match status" value="1"/>
</dbReference>
<dbReference type="Pfam" id="PF07733">
    <property type="entry name" value="DNA_pol3_alpha"/>
    <property type="match status" value="2"/>
</dbReference>
<dbReference type="Pfam" id="PF17657">
    <property type="entry name" value="DNA_pol3_finger"/>
    <property type="match status" value="1"/>
</dbReference>
<dbReference type="Pfam" id="PF14579">
    <property type="entry name" value="HHH_6"/>
    <property type="match status" value="1"/>
</dbReference>
<dbReference type="Pfam" id="PF02811">
    <property type="entry name" value="PHP"/>
    <property type="match status" value="1"/>
</dbReference>
<dbReference type="SMART" id="SM00481">
    <property type="entry name" value="POLIIIAc"/>
    <property type="match status" value="1"/>
</dbReference>
<dbReference type="SUPFAM" id="SSF47781">
    <property type="entry name" value="RuvA domain 2-like"/>
    <property type="match status" value="1"/>
</dbReference>
<evidence type="ECO:0000255" key="1">
    <source>
        <dbReference type="HAMAP-Rule" id="MF_01902"/>
    </source>
</evidence>
<evidence type="ECO:0000256" key="2">
    <source>
        <dbReference type="SAM" id="MobiDB-lite"/>
    </source>
</evidence>
<accession>Q4JTH1</accession>
<gene>
    <name evidence="1" type="primary">dnaE2</name>
    <name type="ordered locus">jk1709</name>
</gene>
<keyword id="KW-0963">Cytoplasm</keyword>
<keyword id="KW-0227">DNA damage</keyword>
<keyword id="KW-0234">DNA repair</keyword>
<keyword id="KW-0235">DNA replication</keyword>
<keyword id="KW-0239">DNA-directed DNA polymerase</keyword>
<keyword id="KW-0548">Nucleotidyltransferase</keyword>
<keyword id="KW-1185">Reference proteome</keyword>
<keyword id="KW-0808">Transferase</keyword>
<sequence length="1153" mass="124693">MFYSCCVSIEPRDPASEPTPTPRRPLRKSQPRSFSQAQPLSWAQLESVLSGRGAGLRNLRAVGVGEGQRRTTSLDPAEAEGTGAEGASQKGITTPFAELHASSAYNFLRGASQPEQMVEAARELGLSALACVDRDGFYGAARFATAVAESGADLATVFGAELSLDVPLTVLCKGREGYTRLSRVIADARMADPDKDSVRYPSLPQLAEAAGGHWLVLLDWRRTDAQLVDFFGADNVVVELQHTMNPADADRNERLHALAVRHGLREIVSSAPTCATPKHSRLAGAKAALRERKDMAAAEPTTHPVGGSWLRSGEEMLQLAGDCEWLARAVETSVQVAEECAFTLDLVAPNLPHFPVPEGYTEMTWLRAITERGGAQRYGPRGSSAAANQAWATIDRELETIEQLGFPGYFLIVHDIVSFCHENNIFCQGRGSAANSAVCFALGITTVDAVASGLLFERFLSPERDGPPDIDLDIESGRREEAIQYVYSRYGRENAAQVANVITYRRRGATRDAGRALGYAPGQIDAWTRHPEQTPDVVQNLAEQMLDHPRHLGIHSGGMVICDRPIAQVVPTEWARMEGRSVVQWDKDDCAAVGLVKFDLLGLGMLEALHHAVDQVRAHRGREVELWRLDPTESEVYAMLSRADAVGVFQVESRAQMSTLPRLKPRTFYDLVVEVALIRPGPIQGGSVHPYIRRRNGLEPVTFDHPCLEPALTKTLGIPLFQEQLMQMAVDAAGFSGAEADTLRRAMGSKRSPQKMERLKKRFYQGLEAKNGIRGVVADRLWDKIVAFASYGFPESHSQSFASLVYYSAWFKYHYPAEFCVALLRAQPMGFYSPQSLLADARRHGVEVLPVDVNDSDVQVDAVASLATPPRTNRPTGVHGLGRGTGEPVGQIRLGLSGAGGVKGISAEVAERIVEARERIGRFTSVEDLSREAGLTVAHVEKLARAGALGSLGLTRRQAVWAAGVAATERPGMLPGTSGVHAPALPGMSAFEMVASELATTGVTTAEHPVQLLREYLDEWHLRPAPRGVHPGDAAPRGGAAVVTADSLLRVPDGTRVRVAGVVTHRQRPATAGGVVFFGLEDETGLANIVVSQGLWARQRAVALNAKILVVRGIVHNAEGAATVTADLLEQVETQLRPAGEIAGAHAGSRDFR</sequence>